<proteinExistence type="inferred from homology"/>
<organism>
    <name type="scientific">Salmonella dublin (strain CT_02021853)</name>
    <dbReference type="NCBI Taxonomy" id="439851"/>
    <lineage>
        <taxon>Bacteria</taxon>
        <taxon>Pseudomonadati</taxon>
        <taxon>Pseudomonadota</taxon>
        <taxon>Gammaproteobacteria</taxon>
        <taxon>Enterobacterales</taxon>
        <taxon>Enterobacteriaceae</taxon>
        <taxon>Salmonella</taxon>
    </lineage>
</organism>
<comment type="function">
    <text evidence="1">Catalyzes the dehydration of D-mannonate.</text>
</comment>
<comment type="catalytic activity">
    <reaction evidence="1">
        <text>D-mannonate = 2-dehydro-3-deoxy-D-gluconate + H2O</text>
        <dbReference type="Rhea" id="RHEA:20097"/>
        <dbReference type="ChEBI" id="CHEBI:15377"/>
        <dbReference type="ChEBI" id="CHEBI:17767"/>
        <dbReference type="ChEBI" id="CHEBI:57990"/>
        <dbReference type="EC" id="4.2.1.8"/>
    </reaction>
</comment>
<comment type="cofactor">
    <cofactor evidence="1">
        <name>Fe(2+)</name>
        <dbReference type="ChEBI" id="CHEBI:29033"/>
    </cofactor>
    <cofactor evidence="1">
        <name>Mn(2+)</name>
        <dbReference type="ChEBI" id="CHEBI:29035"/>
    </cofactor>
</comment>
<comment type="pathway">
    <text evidence="1">Carbohydrate metabolism; pentose and glucuronate interconversion.</text>
</comment>
<comment type="similarity">
    <text evidence="1">Belongs to the mannonate dehydratase family.</text>
</comment>
<gene>
    <name evidence="1" type="primary">uxuA</name>
    <name type="ordered locus">SeD_A3480</name>
</gene>
<accession>B5FUZ9</accession>
<protein>
    <recommendedName>
        <fullName evidence="1">Mannonate dehydratase</fullName>
        <ecNumber evidence="1">4.2.1.8</ecNumber>
    </recommendedName>
    <alternativeName>
        <fullName evidence="1">D-mannonate hydro-lyase</fullName>
    </alternativeName>
</protein>
<evidence type="ECO:0000255" key="1">
    <source>
        <dbReference type="HAMAP-Rule" id="MF_00106"/>
    </source>
</evidence>
<keyword id="KW-0408">Iron</keyword>
<keyword id="KW-0456">Lyase</keyword>
<keyword id="KW-0464">Manganese</keyword>
<sequence length="394" mass="44951">MKQTWRWYGPNDPVTLSDVRQAGATGVVTALHHIPNGEIWSIDEIQKRKAIVEEAGLEWSVVESVPIHEDIKTHTGQYDLWIKNYQQTLRNLAQCGIYTVCYNFMPVLDWTRTDLEYVLPDGSKALRFDQIEFAAFELHILKRPGAEADYTAEEIAQAERRFATMSEEDKARLTRNIIAGLPGAEEGYTLDQFRQHLATYKDIDKAKLREHFAYFLKAIIPVADEVGVRMAVHPDDPPRPILGLPRIVSTIEDMQWMVETVNSMANGFTMCTGSYGVRADNDLVDMIKQFGPRIYFTHLRSTLREENPKTFHEAAHLHGDVDMYEVVKAIVEEEHRRKAEGSDDLIPMRPDHGHQMLDDLKKKTNPGYSAIGRLKGLAEVRGVELAIQRAFFSK</sequence>
<dbReference type="EC" id="4.2.1.8" evidence="1"/>
<dbReference type="EMBL" id="CP001144">
    <property type="protein sequence ID" value="ACH76858.1"/>
    <property type="molecule type" value="Genomic_DNA"/>
</dbReference>
<dbReference type="RefSeq" id="WP_000815479.1">
    <property type="nucleotide sequence ID" value="NC_011205.1"/>
</dbReference>
<dbReference type="SMR" id="B5FUZ9"/>
<dbReference type="KEGG" id="sed:SeD_A3480"/>
<dbReference type="HOGENOM" id="CLU_058621_2_0_6"/>
<dbReference type="UniPathway" id="UPA00246"/>
<dbReference type="Proteomes" id="UP000008322">
    <property type="component" value="Chromosome"/>
</dbReference>
<dbReference type="GO" id="GO:0008198">
    <property type="term" value="F:ferrous iron binding"/>
    <property type="evidence" value="ECO:0007669"/>
    <property type="project" value="TreeGrafter"/>
</dbReference>
<dbReference type="GO" id="GO:0030145">
    <property type="term" value="F:manganese ion binding"/>
    <property type="evidence" value="ECO:0007669"/>
    <property type="project" value="TreeGrafter"/>
</dbReference>
<dbReference type="GO" id="GO:0008927">
    <property type="term" value="F:mannonate dehydratase activity"/>
    <property type="evidence" value="ECO:0007669"/>
    <property type="project" value="UniProtKB-UniRule"/>
</dbReference>
<dbReference type="GO" id="GO:0042840">
    <property type="term" value="P:D-glucuronate catabolic process"/>
    <property type="evidence" value="ECO:0007669"/>
    <property type="project" value="TreeGrafter"/>
</dbReference>
<dbReference type="FunFam" id="3.20.20.150:FF:000004">
    <property type="entry name" value="Mannonate dehydratase"/>
    <property type="match status" value="1"/>
</dbReference>
<dbReference type="FunFam" id="3.20.20.150:FF:000005">
    <property type="entry name" value="Mannonate dehydratase"/>
    <property type="match status" value="1"/>
</dbReference>
<dbReference type="Gene3D" id="3.20.20.150">
    <property type="entry name" value="Divalent-metal-dependent TIM barrel enzymes"/>
    <property type="match status" value="2"/>
</dbReference>
<dbReference type="HAMAP" id="MF_00106">
    <property type="entry name" value="UxuA"/>
    <property type="match status" value="1"/>
</dbReference>
<dbReference type="InterPro" id="IPR004628">
    <property type="entry name" value="Man_deHydtase"/>
</dbReference>
<dbReference type="InterPro" id="IPR036237">
    <property type="entry name" value="Xyl_isomerase-like_sf"/>
</dbReference>
<dbReference type="NCBIfam" id="NF003027">
    <property type="entry name" value="PRK03906.1"/>
    <property type="match status" value="1"/>
</dbReference>
<dbReference type="NCBIfam" id="TIGR00695">
    <property type="entry name" value="uxuA"/>
    <property type="match status" value="1"/>
</dbReference>
<dbReference type="PANTHER" id="PTHR30387">
    <property type="entry name" value="MANNONATE DEHYDRATASE"/>
    <property type="match status" value="1"/>
</dbReference>
<dbReference type="PANTHER" id="PTHR30387:SF2">
    <property type="entry name" value="MANNONATE DEHYDRATASE"/>
    <property type="match status" value="1"/>
</dbReference>
<dbReference type="Pfam" id="PF03786">
    <property type="entry name" value="UxuA"/>
    <property type="match status" value="1"/>
</dbReference>
<dbReference type="PIRSF" id="PIRSF016049">
    <property type="entry name" value="Man_dehyd"/>
    <property type="match status" value="1"/>
</dbReference>
<dbReference type="SUPFAM" id="SSF51658">
    <property type="entry name" value="Xylose isomerase-like"/>
    <property type="match status" value="1"/>
</dbReference>
<feature type="chain" id="PRO_1000094218" description="Mannonate dehydratase">
    <location>
        <begin position="1"/>
        <end position="394"/>
    </location>
</feature>
<reference key="1">
    <citation type="journal article" date="2011" name="J. Bacteriol.">
        <title>Comparative genomics of 28 Salmonella enterica isolates: evidence for CRISPR-mediated adaptive sublineage evolution.</title>
        <authorList>
            <person name="Fricke W.F."/>
            <person name="Mammel M.K."/>
            <person name="McDermott P.F."/>
            <person name="Tartera C."/>
            <person name="White D.G."/>
            <person name="Leclerc J.E."/>
            <person name="Ravel J."/>
            <person name="Cebula T.A."/>
        </authorList>
    </citation>
    <scope>NUCLEOTIDE SEQUENCE [LARGE SCALE GENOMIC DNA]</scope>
    <source>
        <strain>CT_02021853</strain>
    </source>
</reference>
<name>UXUA_SALDC</name>